<proteinExistence type="inferred from homology"/>
<protein>
    <recommendedName>
        <fullName evidence="1">Ketol-acid reductoisomerase (NADP(+))</fullName>
        <shortName evidence="1">KARI</shortName>
        <ecNumber evidence="1">1.1.1.86</ecNumber>
    </recommendedName>
    <alternativeName>
        <fullName evidence="1">Acetohydroxy-acid isomeroreductase</fullName>
        <shortName evidence="1">AHIR</shortName>
    </alternativeName>
    <alternativeName>
        <fullName evidence="1">Alpha-keto-beta-hydroxylacyl reductoisomerase</fullName>
    </alternativeName>
    <alternativeName>
        <fullName evidence="1">Ketol-acid reductoisomerase type 1</fullName>
    </alternativeName>
    <alternativeName>
        <fullName evidence="1">Ketol-acid reductoisomerase type I</fullName>
    </alternativeName>
</protein>
<accession>Q605K9</accession>
<evidence type="ECO:0000255" key="1">
    <source>
        <dbReference type="HAMAP-Rule" id="MF_00435"/>
    </source>
</evidence>
<evidence type="ECO:0000255" key="2">
    <source>
        <dbReference type="PROSITE-ProRule" id="PRU01197"/>
    </source>
</evidence>
<evidence type="ECO:0000255" key="3">
    <source>
        <dbReference type="PROSITE-ProRule" id="PRU01198"/>
    </source>
</evidence>
<reference key="1">
    <citation type="journal article" date="2004" name="PLoS Biol.">
        <title>Genomic insights into methanotrophy: the complete genome sequence of Methylococcus capsulatus (Bath).</title>
        <authorList>
            <person name="Ward N.L."/>
            <person name="Larsen O."/>
            <person name="Sakwa J."/>
            <person name="Bruseth L."/>
            <person name="Khouri H.M."/>
            <person name="Durkin A.S."/>
            <person name="Dimitrov G."/>
            <person name="Jiang L."/>
            <person name="Scanlan D."/>
            <person name="Kang K.H."/>
            <person name="Lewis M.R."/>
            <person name="Nelson K.E."/>
            <person name="Methe B.A."/>
            <person name="Wu M."/>
            <person name="Heidelberg J.F."/>
            <person name="Paulsen I.T."/>
            <person name="Fouts D.E."/>
            <person name="Ravel J."/>
            <person name="Tettelin H."/>
            <person name="Ren Q."/>
            <person name="Read T.D."/>
            <person name="DeBoy R.T."/>
            <person name="Seshadri R."/>
            <person name="Salzberg S.L."/>
            <person name="Jensen H.B."/>
            <person name="Birkeland N.K."/>
            <person name="Nelson W.C."/>
            <person name="Dodson R.J."/>
            <person name="Grindhaug S.H."/>
            <person name="Holt I.E."/>
            <person name="Eidhammer I."/>
            <person name="Jonasen I."/>
            <person name="Vanaken S."/>
            <person name="Utterback T.R."/>
            <person name="Feldblyum T.V."/>
            <person name="Fraser C.M."/>
            <person name="Lillehaug J.R."/>
            <person name="Eisen J.A."/>
        </authorList>
    </citation>
    <scope>NUCLEOTIDE SEQUENCE [LARGE SCALE GENOMIC DNA]</scope>
    <source>
        <strain>ATCC 33009 / NCIMB 11132 / Bath</strain>
    </source>
</reference>
<comment type="function">
    <text evidence="1">Involved in the biosynthesis of branched-chain amino acids (BCAA). Catalyzes an alkyl-migration followed by a ketol-acid reduction of (S)-2-acetolactate (S2AL) to yield (R)-2,3-dihydroxy-isovalerate. In the isomerase reaction, S2AL is rearranged via a Mg-dependent methyl migration to produce 3-hydroxy-3-methyl-2-ketobutyrate (HMKB). In the reductase reaction, this 2-ketoacid undergoes a metal-dependent reduction by NADPH to yield (R)-2,3-dihydroxy-isovalerate.</text>
</comment>
<comment type="catalytic activity">
    <reaction evidence="1">
        <text>(2R)-2,3-dihydroxy-3-methylbutanoate + NADP(+) = (2S)-2-acetolactate + NADPH + H(+)</text>
        <dbReference type="Rhea" id="RHEA:22068"/>
        <dbReference type="ChEBI" id="CHEBI:15378"/>
        <dbReference type="ChEBI" id="CHEBI:49072"/>
        <dbReference type="ChEBI" id="CHEBI:57783"/>
        <dbReference type="ChEBI" id="CHEBI:58349"/>
        <dbReference type="ChEBI" id="CHEBI:58476"/>
        <dbReference type="EC" id="1.1.1.86"/>
    </reaction>
</comment>
<comment type="catalytic activity">
    <reaction evidence="1">
        <text>(2R,3R)-2,3-dihydroxy-3-methylpentanoate + NADP(+) = (S)-2-ethyl-2-hydroxy-3-oxobutanoate + NADPH + H(+)</text>
        <dbReference type="Rhea" id="RHEA:13493"/>
        <dbReference type="ChEBI" id="CHEBI:15378"/>
        <dbReference type="ChEBI" id="CHEBI:49256"/>
        <dbReference type="ChEBI" id="CHEBI:49258"/>
        <dbReference type="ChEBI" id="CHEBI:57783"/>
        <dbReference type="ChEBI" id="CHEBI:58349"/>
        <dbReference type="EC" id="1.1.1.86"/>
    </reaction>
</comment>
<comment type="cofactor">
    <cofactor evidence="1">
        <name>Mg(2+)</name>
        <dbReference type="ChEBI" id="CHEBI:18420"/>
    </cofactor>
    <text evidence="1">Binds 2 magnesium ions per subunit.</text>
</comment>
<comment type="pathway">
    <text evidence="1">Amino-acid biosynthesis; L-isoleucine biosynthesis; L-isoleucine from 2-oxobutanoate: step 2/4.</text>
</comment>
<comment type="pathway">
    <text evidence="1">Amino-acid biosynthesis; L-valine biosynthesis; L-valine from pyruvate: step 2/4.</text>
</comment>
<comment type="similarity">
    <text evidence="1">Belongs to the ketol-acid reductoisomerase family.</text>
</comment>
<feature type="chain" id="PRO_0000226182" description="Ketol-acid reductoisomerase (NADP(+))">
    <location>
        <begin position="1"/>
        <end position="338"/>
    </location>
</feature>
<feature type="domain" description="KARI N-terminal Rossmann" evidence="2">
    <location>
        <begin position="1"/>
        <end position="181"/>
    </location>
</feature>
<feature type="domain" description="KARI C-terminal knotted" evidence="3">
    <location>
        <begin position="182"/>
        <end position="327"/>
    </location>
</feature>
<feature type="active site" evidence="1">
    <location>
        <position position="107"/>
    </location>
</feature>
<feature type="binding site" evidence="1">
    <location>
        <begin position="24"/>
        <end position="27"/>
    </location>
    <ligand>
        <name>NADP(+)</name>
        <dbReference type="ChEBI" id="CHEBI:58349"/>
    </ligand>
</feature>
<feature type="binding site" evidence="1">
    <location>
        <position position="47"/>
    </location>
    <ligand>
        <name>NADP(+)</name>
        <dbReference type="ChEBI" id="CHEBI:58349"/>
    </ligand>
</feature>
<feature type="binding site" evidence="1">
    <location>
        <position position="50"/>
    </location>
    <ligand>
        <name>NADP(+)</name>
        <dbReference type="ChEBI" id="CHEBI:58349"/>
    </ligand>
</feature>
<feature type="binding site" evidence="1">
    <location>
        <position position="52"/>
    </location>
    <ligand>
        <name>NADP(+)</name>
        <dbReference type="ChEBI" id="CHEBI:58349"/>
    </ligand>
</feature>
<feature type="binding site" evidence="1">
    <location>
        <begin position="82"/>
        <end position="85"/>
    </location>
    <ligand>
        <name>NADP(+)</name>
        <dbReference type="ChEBI" id="CHEBI:58349"/>
    </ligand>
</feature>
<feature type="binding site" evidence="1">
    <location>
        <position position="133"/>
    </location>
    <ligand>
        <name>NADP(+)</name>
        <dbReference type="ChEBI" id="CHEBI:58349"/>
    </ligand>
</feature>
<feature type="binding site" evidence="1">
    <location>
        <position position="190"/>
    </location>
    <ligand>
        <name>Mg(2+)</name>
        <dbReference type="ChEBI" id="CHEBI:18420"/>
        <label>1</label>
    </ligand>
</feature>
<feature type="binding site" evidence="1">
    <location>
        <position position="190"/>
    </location>
    <ligand>
        <name>Mg(2+)</name>
        <dbReference type="ChEBI" id="CHEBI:18420"/>
        <label>2</label>
    </ligand>
</feature>
<feature type="binding site" evidence="1">
    <location>
        <position position="194"/>
    </location>
    <ligand>
        <name>Mg(2+)</name>
        <dbReference type="ChEBI" id="CHEBI:18420"/>
        <label>1</label>
    </ligand>
</feature>
<feature type="binding site" evidence="1">
    <location>
        <position position="226"/>
    </location>
    <ligand>
        <name>Mg(2+)</name>
        <dbReference type="ChEBI" id="CHEBI:18420"/>
        <label>2</label>
    </ligand>
</feature>
<feature type="binding site" evidence="1">
    <location>
        <position position="230"/>
    </location>
    <ligand>
        <name>Mg(2+)</name>
        <dbReference type="ChEBI" id="CHEBI:18420"/>
        <label>2</label>
    </ligand>
</feature>
<feature type="binding site" evidence="1">
    <location>
        <position position="251"/>
    </location>
    <ligand>
        <name>substrate</name>
    </ligand>
</feature>
<name>ILVC_METCA</name>
<dbReference type="EC" id="1.1.1.86" evidence="1"/>
<dbReference type="EMBL" id="AE017282">
    <property type="protein sequence ID" value="AAU91718.1"/>
    <property type="molecule type" value="Genomic_DNA"/>
</dbReference>
<dbReference type="RefSeq" id="WP_010961502.1">
    <property type="nucleotide sequence ID" value="NC_002977.6"/>
</dbReference>
<dbReference type="SMR" id="Q605K9"/>
<dbReference type="STRING" id="243233.MCA2272"/>
<dbReference type="GeneID" id="88224478"/>
<dbReference type="KEGG" id="mca:MCA2272"/>
<dbReference type="eggNOG" id="COG0059">
    <property type="taxonomic scope" value="Bacteria"/>
</dbReference>
<dbReference type="HOGENOM" id="CLU_033821_0_1_6"/>
<dbReference type="UniPathway" id="UPA00047">
    <property type="reaction ID" value="UER00056"/>
</dbReference>
<dbReference type="UniPathway" id="UPA00049">
    <property type="reaction ID" value="UER00060"/>
</dbReference>
<dbReference type="Proteomes" id="UP000006821">
    <property type="component" value="Chromosome"/>
</dbReference>
<dbReference type="GO" id="GO:0005829">
    <property type="term" value="C:cytosol"/>
    <property type="evidence" value="ECO:0007669"/>
    <property type="project" value="TreeGrafter"/>
</dbReference>
<dbReference type="GO" id="GO:0004455">
    <property type="term" value="F:ketol-acid reductoisomerase activity"/>
    <property type="evidence" value="ECO:0007669"/>
    <property type="project" value="UniProtKB-UniRule"/>
</dbReference>
<dbReference type="GO" id="GO:0000287">
    <property type="term" value="F:magnesium ion binding"/>
    <property type="evidence" value="ECO:0007669"/>
    <property type="project" value="UniProtKB-UniRule"/>
</dbReference>
<dbReference type="GO" id="GO:0050661">
    <property type="term" value="F:NADP binding"/>
    <property type="evidence" value="ECO:0007669"/>
    <property type="project" value="InterPro"/>
</dbReference>
<dbReference type="GO" id="GO:0009097">
    <property type="term" value="P:isoleucine biosynthetic process"/>
    <property type="evidence" value="ECO:0007669"/>
    <property type="project" value="UniProtKB-UniRule"/>
</dbReference>
<dbReference type="GO" id="GO:0009099">
    <property type="term" value="P:L-valine biosynthetic process"/>
    <property type="evidence" value="ECO:0007669"/>
    <property type="project" value="UniProtKB-UniRule"/>
</dbReference>
<dbReference type="FunFam" id="3.40.50.720:FF:000023">
    <property type="entry name" value="Ketol-acid reductoisomerase (NADP(+))"/>
    <property type="match status" value="1"/>
</dbReference>
<dbReference type="Gene3D" id="6.10.240.10">
    <property type="match status" value="1"/>
</dbReference>
<dbReference type="Gene3D" id="3.40.50.720">
    <property type="entry name" value="NAD(P)-binding Rossmann-like Domain"/>
    <property type="match status" value="1"/>
</dbReference>
<dbReference type="HAMAP" id="MF_00435">
    <property type="entry name" value="IlvC"/>
    <property type="match status" value="1"/>
</dbReference>
<dbReference type="InterPro" id="IPR008927">
    <property type="entry name" value="6-PGluconate_DH-like_C_sf"/>
</dbReference>
<dbReference type="InterPro" id="IPR013023">
    <property type="entry name" value="KARI"/>
</dbReference>
<dbReference type="InterPro" id="IPR000506">
    <property type="entry name" value="KARI_C"/>
</dbReference>
<dbReference type="InterPro" id="IPR013116">
    <property type="entry name" value="KARI_N"/>
</dbReference>
<dbReference type="InterPro" id="IPR014359">
    <property type="entry name" value="KARI_prok"/>
</dbReference>
<dbReference type="InterPro" id="IPR036291">
    <property type="entry name" value="NAD(P)-bd_dom_sf"/>
</dbReference>
<dbReference type="NCBIfam" id="TIGR00465">
    <property type="entry name" value="ilvC"/>
    <property type="match status" value="1"/>
</dbReference>
<dbReference type="NCBIfam" id="NF004017">
    <property type="entry name" value="PRK05479.1"/>
    <property type="match status" value="1"/>
</dbReference>
<dbReference type="NCBIfam" id="NF009940">
    <property type="entry name" value="PRK13403.1"/>
    <property type="match status" value="1"/>
</dbReference>
<dbReference type="PANTHER" id="PTHR21371">
    <property type="entry name" value="KETOL-ACID REDUCTOISOMERASE, MITOCHONDRIAL"/>
    <property type="match status" value="1"/>
</dbReference>
<dbReference type="PANTHER" id="PTHR21371:SF1">
    <property type="entry name" value="KETOL-ACID REDUCTOISOMERASE, MITOCHONDRIAL"/>
    <property type="match status" value="1"/>
</dbReference>
<dbReference type="Pfam" id="PF01450">
    <property type="entry name" value="KARI_C"/>
    <property type="match status" value="1"/>
</dbReference>
<dbReference type="Pfam" id="PF07991">
    <property type="entry name" value="KARI_N"/>
    <property type="match status" value="1"/>
</dbReference>
<dbReference type="PIRSF" id="PIRSF000116">
    <property type="entry name" value="IlvC_gammaproteo"/>
    <property type="match status" value="1"/>
</dbReference>
<dbReference type="SUPFAM" id="SSF48179">
    <property type="entry name" value="6-phosphogluconate dehydrogenase C-terminal domain-like"/>
    <property type="match status" value="1"/>
</dbReference>
<dbReference type="SUPFAM" id="SSF51735">
    <property type="entry name" value="NAD(P)-binding Rossmann-fold domains"/>
    <property type="match status" value="1"/>
</dbReference>
<dbReference type="PROSITE" id="PS51851">
    <property type="entry name" value="KARI_C"/>
    <property type="match status" value="1"/>
</dbReference>
<dbReference type="PROSITE" id="PS51850">
    <property type="entry name" value="KARI_N"/>
    <property type="match status" value="1"/>
</dbReference>
<keyword id="KW-0028">Amino-acid biosynthesis</keyword>
<keyword id="KW-0100">Branched-chain amino acid biosynthesis</keyword>
<keyword id="KW-0460">Magnesium</keyword>
<keyword id="KW-0479">Metal-binding</keyword>
<keyword id="KW-0521">NADP</keyword>
<keyword id="KW-0560">Oxidoreductase</keyword>
<keyword id="KW-1185">Reference proteome</keyword>
<sequence>MQIYYDKDADLSIIQGKKVAIIGYGSQGHAHANNLKDSGVQVVVGLRPGSASAKKAENAGLAVASVEDAVKQADVIMILAPDEHQARLYNEQIAPNIKQGAALAFAHGFNIHFEQITPRADLDVIMIAPKGPGHLVRSTYTQGGGVPSLIAVYQNASGRAKELALSYASANGGGRAGIIETTFREETETDLFGEQAVLCGGATALVQAGFETLVEAGYAPEMAYFECLHELKLIVDLMYEGGIANMRYSISNTAEYGDLTRGPRIVTEQTKQEMKKILREIQTGEFAREFILENQAGAATLKAKRRLGREHLIESVGARLRDMMPWIKANRIVDTSKN</sequence>
<organism>
    <name type="scientific">Methylococcus capsulatus (strain ATCC 33009 / NCIMB 11132 / Bath)</name>
    <dbReference type="NCBI Taxonomy" id="243233"/>
    <lineage>
        <taxon>Bacteria</taxon>
        <taxon>Pseudomonadati</taxon>
        <taxon>Pseudomonadota</taxon>
        <taxon>Gammaproteobacteria</taxon>
        <taxon>Methylococcales</taxon>
        <taxon>Methylococcaceae</taxon>
        <taxon>Methylococcus</taxon>
    </lineage>
</organism>
<gene>
    <name evidence="1" type="primary">ilvC</name>
    <name type="ordered locus">MCA2272</name>
</gene>